<geneLocation type="chloroplast"/>
<feature type="chain" id="PRO_0000292111" description="Photosystem I iron-sulfur center">
    <location>
        <begin position="1"/>
        <end position="81"/>
    </location>
</feature>
<feature type="domain" description="4Fe-4S ferredoxin-type 1" evidence="1">
    <location>
        <begin position="2"/>
        <end position="31"/>
    </location>
</feature>
<feature type="domain" description="4Fe-4S ferredoxin-type 2" evidence="1">
    <location>
        <begin position="39"/>
        <end position="68"/>
    </location>
</feature>
<feature type="binding site" evidence="1">
    <location>
        <position position="11"/>
    </location>
    <ligand>
        <name>[4Fe-4S] cluster</name>
        <dbReference type="ChEBI" id="CHEBI:49883"/>
        <label>1</label>
    </ligand>
</feature>
<feature type="binding site" evidence="1">
    <location>
        <position position="14"/>
    </location>
    <ligand>
        <name>[4Fe-4S] cluster</name>
        <dbReference type="ChEBI" id="CHEBI:49883"/>
        <label>1</label>
    </ligand>
</feature>
<feature type="binding site" evidence="1">
    <location>
        <position position="17"/>
    </location>
    <ligand>
        <name>[4Fe-4S] cluster</name>
        <dbReference type="ChEBI" id="CHEBI:49883"/>
        <label>1</label>
    </ligand>
</feature>
<feature type="binding site" evidence="1">
    <location>
        <position position="21"/>
    </location>
    <ligand>
        <name>[4Fe-4S] cluster</name>
        <dbReference type="ChEBI" id="CHEBI:49883"/>
        <label>2</label>
    </ligand>
</feature>
<feature type="binding site" evidence="1">
    <location>
        <position position="48"/>
    </location>
    <ligand>
        <name>[4Fe-4S] cluster</name>
        <dbReference type="ChEBI" id="CHEBI:49883"/>
        <label>2</label>
    </ligand>
</feature>
<feature type="binding site" evidence="1">
    <location>
        <position position="51"/>
    </location>
    <ligand>
        <name>[4Fe-4S] cluster</name>
        <dbReference type="ChEBI" id="CHEBI:49883"/>
        <label>2</label>
    </ligand>
</feature>
<feature type="binding site" evidence="1">
    <location>
        <position position="54"/>
    </location>
    <ligand>
        <name>[4Fe-4S] cluster</name>
        <dbReference type="ChEBI" id="CHEBI:49883"/>
        <label>2</label>
    </ligand>
</feature>
<feature type="binding site" evidence="1">
    <location>
        <position position="58"/>
    </location>
    <ligand>
        <name>[4Fe-4S] cluster</name>
        <dbReference type="ChEBI" id="CHEBI:49883"/>
        <label>1</label>
    </ligand>
</feature>
<feature type="strand" evidence="2">
    <location>
        <begin position="4"/>
        <end position="8"/>
    </location>
</feature>
<feature type="helix" evidence="2">
    <location>
        <begin position="18"/>
        <end position="20"/>
    </location>
</feature>
<feature type="strand" evidence="2">
    <location>
        <begin position="27"/>
        <end position="30"/>
    </location>
</feature>
<feature type="strand" evidence="2">
    <location>
        <begin position="32"/>
        <end position="34"/>
    </location>
</feature>
<feature type="strand" evidence="2">
    <location>
        <begin position="38"/>
        <end position="41"/>
    </location>
</feature>
<feature type="helix" evidence="2">
    <location>
        <begin position="45"/>
        <end position="47"/>
    </location>
</feature>
<feature type="helix" evidence="2">
    <location>
        <begin position="53"/>
        <end position="56"/>
    </location>
</feature>
<feature type="strand" evidence="2">
    <location>
        <begin position="60"/>
        <end position="62"/>
    </location>
</feature>
<feature type="strand" evidence="2">
    <location>
        <begin position="64"/>
        <end position="68"/>
    </location>
</feature>
<feature type="turn" evidence="2">
    <location>
        <begin position="74"/>
        <end position="78"/>
    </location>
</feature>
<evidence type="ECO:0000255" key="1">
    <source>
        <dbReference type="HAMAP-Rule" id="MF_01303"/>
    </source>
</evidence>
<evidence type="ECO:0007829" key="2">
    <source>
        <dbReference type="PDB" id="8WGH"/>
    </source>
</evidence>
<accession>A4QJG7</accession>
<name>PSAC_AETCO</name>
<proteinExistence type="evidence at protein level"/>
<reference key="1">
    <citation type="submission" date="2007-03" db="EMBL/GenBank/DDBJ databases">
        <title>Sequencing analysis of Aethionema coridifolium chloroplast DNA.</title>
        <authorList>
            <person name="Hosouchi T."/>
            <person name="Tsuruoka H."/>
            <person name="Kotani H."/>
        </authorList>
    </citation>
    <scope>NUCLEOTIDE SEQUENCE [LARGE SCALE GENOMIC DNA]</scope>
</reference>
<keyword id="KW-0002">3D-structure</keyword>
<keyword id="KW-0004">4Fe-4S</keyword>
<keyword id="KW-0150">Chloroplast</keyword>
<keyword id="KW-0249">Electron transport</keyword>
<keyword id="KW-0408">Iron</keyword>
<keyword id="KW-0411">Iron-sulfur</keyword>
<keyword id="KW-0472">Membrane</keyword>
<keyword id="KW-0479">Metal-binding</keyword>
<keyword id="KW-0560">Oxidoreductase</keyword>
<keyword id="KW-0602">Photosynthesis</keyword>
<keyword id="KW-0603">Photosystem I</keyword>
<keyword id="KW-0934">Plastid</keyword>
<keyword id="KW-0677">Repeat</keyword>
<keyword id="KW-0793">Thylakoid</keyword>
<keyword id="KW-0813">Transport</keyword>
<dbReference type="EC" id="1.97.1.12" evidence="1"/>
<dbReference type="EMBL" id="AP009366">
    <property type="protein sequence ID" value="BAF49822.1"/>
    <property type="molecule type" value="Genomic_DNA"/>
</dbReference>
<dbReference type="RefSeq" id="YP_001122997.1">
    <property type="nucleotide sequence ID" value="NC_009265.1"/>
</dbReference>
<dbReference type="PDB" id="8WGH">
    <property type="method" value="EM"/>
    <property type="resolution" value="2.40 A"/>
    <property type="chains" value="C=1-81"/>
</dbReference>
<dbReference type="PDBsum" id="8WGH"/>
<dbReference type="EMDB" id="EMD-37513"/>
<dbReference type="SMR" id="A4QJG7"/>
<dbReference type="GeneID" id="4968656"/>
<dbReference type="GO" id="GO:0009535">
    <property type="term" value="C:chloroplast thylakoid membrane"/>
    <property type="evidence" value="ECO:0007669"/>
    <property type="project" value="UniProtKB-SubCell"/>
</dbReference>
<dbReference type="GO" id="GO:0009522">
    <property type="term" value="C:photosystem I"/>
    <property type="evidence" value="ECO:0007669"/>
    <property type="project" value="UniProtKB-KW"/>
</dbReference>
<dbReference type="GO" id="GO:0051539">
    <property type="term" value="F:4 iron, 4 sulfur cluster binding"/>
    <property type="evidence" value="ECO:0007669"/>
    <property type="project" value="UniProtKB-KW"/>
</dbReference>
<dbReference type="GO" id="GO:0009055">
    <property type="term" value="F:electron transfer activity"/>
    <property type="evidence" value="ECO:0007669"/>
    <property type="project" value="UniProtKB-UniRule"/>
</dbReference>
<dbReference type="GO" id="GO:0046872">
    <property type="term" value="F:metal ion binding"/>
    <property type="evidence" value="ECO:0007669"/>
    <property type="project" value="UniProtKB-KW"/>
</dbReference>
<dbReference type="GO" id="GO:0016491">
    <property type="term" value="F:oxidoreductase activity"/>
    <property type="evidence" value="ECO:0007669"/>
    <property type="project" value="UniProtKB-KW"/>
</dbReference>
<dbReference type="GO" id="GO:0009773">
    <property type="term" value="P:photosynthetic electron transport in photosystem I"/>
    <property type="evidence" value="ECO:0007669"/>
    <property type="project" value="InterPro"/>
</dbReference>
<dbReference type="FunFam" id="3.30.70.20:FF:000001">
    <property type="entry name" value="Photosystem I iron-sulfur center"/>
    <property type="match status" value="1"/>
</dbReference>
<dbReference type="Gene3D" id="3.30.70.20">
    <property type="match status" value="1"/>
</dbReference>
<dbReference type="HAMAP" id="MF_01303">
    <property type="entry name" value="PSI_PsaC"/>
    <property type="match status" value="1"/>
</dbReference>
<dbReference type="InterPro" id="IPR017896">
    <property type="entry name" value="4Fe4S_Fe-S-bd"/>
</dbReference>
<dbReference type="InterPro" id="IPR017900">
    <property type="entry name" value="4Fe4S_Fe_S_CS"/>
</dbReference>
<dbReference type="InterPro" id="IPR050157">
    <property type="entry name" value="PSI_iron-sulfur_center"/>
</dbReference>
<dbReference type="InterPro" id="IPR017491">
    <property type="entry name" value="PSI_PsaC"/>
</dbReference>
<dbReference type="NCBIfam" id="TIGR03048">
    <property type="entry name" value="PS_I_psaC"/>
    <property type="match status" value="1"/>
</dbReference>
<dbReference type="PANTHER" id="PTHR24960:SF79">
    <property type="entry name" value="PHOTOSYSTEM I IRON-SULFUR CENTER"/>
    <property type="match status" value="1"/>
</dbReference>
<dbReference type="PANTHER" id="PTHR24960">
    <property type="entry name" value="PHOTOSYSTEM I IRON-SULFUR CENTER-RELATED"/>
    <property type="match status" value="1"/>
</dbReference>
<dbReference type="Pfam" id="PF14697">
    <property type="entry name" value="Fer4_21"/>
    <property type="match status" value="1"/>
</dbReference>
<dbReference type="SUPFAM" id="SSF54862">
    <property type="entry name" value="4Fe-4S ferredoxins"/>
    <property type="match status" value="1"/>
</dbReference>
<dbReference type="PROSITE" id="PS00198">
    <property type="entry name" value="4FE4S_FER_1"/>
    <property type="match status" value="2"/>
</dbReference>
<dbReference type="PROSITE" id="PS51379">
    <property type="entry name" value="4FE4S_FER_2"/>
    <property type="match status" value="2"/>
</dbReference>
<gene>
    <name evidence="1" type="primary">psaC</name>
</gene>
<protein>
    <recommendedName>
        <fullName evidence="1">Photosystem I iron-sulfur center</fullName>
        <ecNumber evidence="1">1.97.1.12</ecNumber>
    </recommendedName>
    <alternativeName>
        <fullName evidence="1">9 kDa polypeptide</fullName>
    </alternativeName>
    <alternativeName>
        <fullName evidence="1">PSI-C</fullName>
    </alternativeName>
    <alternativeName>
        <fullName evidence="1">Photosystem I subunit VII</fullName>
    </alternativeName>
    <alternativeName>
        <fullName evidence="1">PsaC</fullName>
    </alternativeName>
</protein>
<organism>
    <name type="scientific">Aethionema cordifolium</name>
    <name type="common">Lebanon stonecress</name>
    <dbReference type="NCBI Taxonomy" id="434059"/>
    <lineage>
        <taxon>Eukaryota</taxon>
        <taxon>Viridiplantae</taxon>
        <taxon>Streptophyta</taxon>
        <taxon>Embryophyta</taxon>
        <taxon>Tracheophyta</taxon>
        <taxon>Spermatophyta</taxon>
        <taxon>Magnoliopsida</taxon>
        <taxon>eudicotyledons</taxon>
        <taxon>Gunneridae</taxon>
        <taxon>Pentapetalae</taxon>
        <taxon>rosids</taxon>
        <taxon>malvids</taxon>
        <taxon>Brassicales</taxon>
        <taxon>Brassicaceae</taxon>
        <taxon>Aethionemeae</taxon>
        <taxon>Aethionema</taxon>
    </lineage>
</organism>
<sequence length="81" mass="9038">MSHSVKIYDTCIGCTQCVRACPTDVLEMIPWDGCKAKQIASAPRTEDCVGCKRCESACPTDFLSVRVYLWHETTRSMGLAY</sequence>
<comment type="function">
    <text evidence="1">Apoprotein for the two 4Fe-4S centers FA and FB of photosystem I (PSI); essential for photochemical activity. FB is the terminal electron acceptor of PSI, donating electrons to ferredoxin. The C-terminus interacts with PsaA/B/D and helps assemble the protein into the PSI complex. Required for binding of PsaD and PsaE to PSI. PSI is a plastocyanin-ferredoxin oxidoreductase, converting photonic excitation into a charge separation, which transfers an electron from the donor P700 chlorophyll pair to the spectroscopically characterized acceptors A0, A1, FX, FA and FB in turn.</text>
</comment>
<comment type="catalytic activity">
    <reaction evidence="1">
        <text>reduced [plastocyanin] + hnu + oxidized [2Fe-2S]-[ferredoxin] = oxidized [plastocyanin] + reduced [2Fe-2S]-[ferredoxin]</text>
        <dbReference type="Rhea" id="RHEA:30407"/>
        <dbReference type="Rhea" id="RHEA-COMP:10000"/>
        <dbReference type="Rhea" id="RHEA-COMP:10001"/>
        <dbReference type="Rhea" id="RHEA-COMP:10039"/>
        <dbReference type="Rhea" id="RHEA-COMP:10040"/>
        <dbReference type="ChEBI" id="CHEBI:29036"/>
        <dbReference type="ChEBI" id="CHEBI:30212"/>
        <dbReference type="ChEBI" id="CHEBI:33737"/>
        <dbReference type="ChEBI" id="CHEBI:33738"/>
        <dbReference type="ChEBI" id="CHEBI:49552"/>
        <dbReference type="EC" id="1.97.1.12"/>
    </reaction>
</comment>
<comment type="cofactor">
    <cofactor evidence="1">
        <name>[4Fe-4S] cluster</name>
        <dbReference type="ChEBI" id="CHEBI:49883"/>
    </cofactor>
    <text evidence="1">Binds 2 [4Fe-4S] clusters. Cluster 2 is most probably the spectroscopically characterized electron acceptor FA and cluster 1 is most probably FB.</text>
</comment>
<comment type="subunit">
    <text evidence="1">The eukaryotic PSI reaction center is composed of at least 11 subunits.</text>
</comment>
<comment type="subcellular location">
    <subcellularLocation>
        <location evidence="1">Plastid</location>
        <location evidence="1">Chloroplast thylakoid membrane</location>
        <topology evidence="1">Peripheral membrane protein</topology>
        <orientation evidence="1">Stromal side</orientation>
    </subcellularLocation>
</comment>